<sequence>MAETKKGSESYPIKTIVVLVQENRSFDHTLGWFKELNREIDGVMKSDQKFNPGFSSDLNSHNVVFGDQSQYVDPNPGHSIRDIYEQVFGKPWDSGHPDPNPGPATMSGFAQNAERKMKGMSSAVMNGFKPDALPVYKELVQNFAICDRWFASVPGATQPNRLFIHSATSHGTTNNERKLLIEGFPQKTIFESLDEAGFTFGIYYQCFPTTLFYRNLRKLKYLTRFHDYGLQFKKDCKEGNLPNYVVVEQRWYDLLLNPANDDHPSHDVSEGQKLVKEVYEALRSSPQWNEILFIITYDEHGGFYDHVPTPLDGVPNPDGILGPPPYNFEFNRLGVRVPTFFISPWIEPGTVLHGSNGPYLMSQYEHSSIPATVKKIFKLKDFLTKRDSWAGTFESVITRNSPRQDCPETLSNPVKMRGTVAKENAELSDFQEELVIVAAGLKGDYKNEELLYKLCKKTCVSDASKYVTKAFDKFVEESKKARERGGDENDIVFCVDDDDDHNVVKPPPSQSEPSHATPWSN</sequence>
<keyword id="KW-0963">Cytoplasm</keyword>
<keyword id="KW-0378">Hydrolase</keyword>
<keyword id="KW-1185">Reference proteome</keyword>
<comment type="function">
    <text evidence="3">Non-specific phospholipase C (PLC) which assumes minor PLC activity during inorganic phosphate starvation. Can hydrolyze both phosphatidylcholine (PC) and phosphatidylethanolamine (PE). Required for normal accumulation of digalactosyldiacylglycerol (DGDG) during phosphate limitation and may contribute to the conversion of phospholipids to diacylglycerol, the substrate for galactolipid synthesis.</text>
</comment>
<comment type="catalytic activity">
    <reaction>
        <text>a 1,2-diacyl-sn-glycero-3-phosphocholine + H2O = phosphocholine + a 1,2-diacyl-sn-glycerol + H(+)</text>
        <dbReference type="Rhea" id="RHEA:10604"/>
        <dbReference type="ChEBI" id="CHEBI:15377"/>
        <dbReference type="ChEBI" id="CHEBI:15378"/>
        <dbReference type="ChEBI" id="CHEBI:17815"/>
        <dbReference type="ChEBI" id="CHEBI:57643"/>
        <dbReference type="ChEBI" id="CHEBI:295975"/>
        <dbReference type="EC" id="3.1.4.3"/>
    </reaction>
</comment>
<comment type="interaction">
    <interactant intactId="EBI-25513162">
        <id>Q9S816</id>
    </interactant>
    <interactant intactId="EBI-4427281">
        <id>Q9C9P3</id>
        <label>KJC1</label>
    </interactant>
    <organismsDiffer>false</organismsDiffer>
    <experiments>3</experiments>
</comment>
<comment type="subcellular location">
    <subcellularLocation>
        <location evidence="3">Cytoplasm</location>
        <location evidence="3">Cytosol</location>
    </subcellularLocation>
</comment>
<comment type="tissue specificity">
    <text evidence="4">Specifically expressed in flowers.</text>
</comment>
<comment type="induction">
    <text evidence="2 3">Slightly induced by inorganic phosphate deprivation.</text>
</comment>
<comment type="disruption phenotype">
    <text evidence="3">No visible phenotype under normal growth conditions, but mutant plants accumulates reduced levels of digalactosyldiacylglycerol (DGDG) during phosphate limitation.</text>
</comment>
<comment type="similarity">
    <text evidence="5">Belongs to the bacterial phospholipase C family.</text>
</comment>
<evidence type="ECO:0000256" key="1">
    <source>
        <dbReference type="SAM" id="MobiDB-lite"/>
    </source>
</evidence>
<evidence type="ECO:0000269" key="2">
    <source>
    </source>
</evidence>
<evidence type="ECO:0000269" key="3">
    <source>
    </source>
</evidence>
<evidence type="ECO:0000269" key="4">
    <source>
    </source>
</evidence>
<evidence type="ECO:0000305" key="5"/>
<accession>Q9S816</accession>
<proteinExistence type="evidence at protein level"/>
<dbReference type="EC" id="3.1.4.3"/>
<dbReference type="EMBL" id="AB084294">
    <property type="protein sequence ID" value="BAC22509.1"/>
    <property type="molecule type" value="mRNA"/>
</dbReference>
<dbReference type="EMBL" id="AC009327">
    <property type="protein sequence ID" value="AAF03477.1"/>
    <property type="molecule type" value="Genomic_DNA"/>
</dbReference>
<dbReference type="EMBL" id="AC009895">
    <property type="protein sequence ID" value="AAF01581.1"/>
    <property type="molecule type" value="Genomic_DNA"/>
</dbReference>
<dbReference type="EMBL" id="CP002686">
    <property type="protein sequence ID" value="AEE73955.1"/>
    <property type="molecule type" value="Genomic_DNA"/>
</dbReference>
<dbReference type="RefSeq" id="NP_566207.1">
    <property type="nucleotide sequence ID" value="NM_111225.2"/>
</dbReference>
<dbReference type="SMR" id="Q9S816"/>
<dbReference type="BioGRID" id="6574">
    <property type="interactions" value="1"/>
</dbReference>
<dbReference type="FunCoup" id="Q9S816">
    <property type="interactions" value="76"/>
</dbReference>
<dbReference type="IntAct" id="Q9S816">
    <property type="interactions" value="1"/>
</dbReference>
<dbReference type="STRING" id="3702.Q9S816"/>
<dbReference type="PaxDb" id="3702-AT3G03540.1"/>
<dbReference type="ProteomicsDB" id="248935"/>
<dbReference type="EnsemblPlants" id="AT3G03540.1">
    <property type="protein sequence ID" value="AT3G03540.1"/>
    <property type="gene ID" value="AT3G03540"/>
</dbReference>
<dbReference type="GeneID" id="821241"/>
<dbReference type="Gramene" id="AT3G03540.1">
    <property type="protein sequence ID" value="AT3G03540.1"/>
    <property type="gene ID" value="AT3G03540"/>
</dbReference>
<dbReference type="KEGG" id="ath:AT3G03540"/>
<dbReference type="Araport" id="AT3G03540"/>
<dbReference type="TAIR" id="AT3G03540">
    <property type="gene designation" value="NPC5"/>
</dbReference>
<dbReference type="eggNOG" id="ENOG502QPJ0">
    <property type="taxonomic scope" value="Eukaryota"/>
</dbReference>
<dbReference type="HOGENOM" id="CLU_029943_1_0_1"/>
<dbReference type="InParanoid" id="Q9S816"/>
<dbReference type="OMA" id="EGMPQRT"/>
<dbReference type="OrthoDB" id="5135119at2759"/>
<dbReference type="PhylomeDB" id="Q9S816"/>
<dbReference type="BioCyc" id="ARA:AT3G03540-MONOMER"/>
<dbReference type="BioCyc" id="MetaCyc:AT3G03540-MONOMER"/>
<dbReference type="BRENDA" id="3.1.4.3">
    <property type="organism ID" value="399"/>
</dbReference>
<dbReference type="PRO" id="PR:Q9S816"/>
<dbReference type="Proteomes" id="UP000006548">
    <property type="component" value="Chromosome 3"/>
</dbReference>
<dbReference type="ExpressionAtlas" id="Q9S816">
    <property type="expression patterns" value="baseline and differential"/>
</dbReference>
<dbReference type="GO" id="GO:0005829">
    <property type="term" value="C:cytosol"/>
    <property type="evidence" value="ECO:0000314"/>
    <property type="project" value="TAIR"/>
</dbReference>
<dbReference type="GO" id="GO:0016020">
    <property type="term" value="C:membrane"/>
    <property type="evidence" value="ECO:0007669"/>
    <property type="project" value="GOC"/>
</dbReference>
<dbReference type="GO" id="GO:0034480">
    <property type="term" value="F:phosphatidylcholine phospholipase C activity"/>
    <property type="evidence" value="ECO:0007669"/>
    <property type="project" value="UniProtKB-EC"/>
</dbReference>
<dbReference type="GO" id="GO:0004629">
    <property type="term" value="F:phospholipase C activity"/>
    <property type="evidence" value="ECO:0000314"/>
    <property type="project" value="TAIR"/>
</dbReference>
<dbReference type="GO" id="GO:0016036">
    <property type="term" value="P:cellular response to phosphate starvation"/>
    <property type="evidence" value="ECO:0000315"/>
    <property type="project" value="TAIR"/>
</dbReference>
<dbReference type="GO" id="GO:0009247">
    <property type="term" value="P:glycolipid biosynthetic process"/>
    <property type="evidence" value="ECO:0000315"/>
    <property type="project" value="TAIR"/>
</dbReference>
<dbReference type="GO" id="GO:0009395">
    <property type="term" value="P:phospholipid catabolic process"/>
    <property type="evidence" value="ECO:0000315"/>
    <property type="project" value="TAIR"/>
</dbReference>
<dbReference type="CDD" id="cd16013">
    <property type="entry name" value="AcpA"/>
    <property type="match status" value="1"/>
</dbReference>
<dbReference type="FunFam" id="3.40.720.10:FF:000011">
    <property type="entry name" value="Non-specific phospholipase C1"/>
    <property type="match status" value="1"/>
</dbReference>
<dbReference type="FunFam" id="3.40.720.10:FF:000079">
    <property type="entry name" value="Non-specific phospholipase C5"/>
    <property type="match status" value="1"/>
</dbReference>
<dbReference type="Gene3D" id="3.40.720.10">
    <property type="entry name" value="Alkaline Phosphatase, subunit A"/>
    <property type="match status" value="2"/>
</dbReference>
<dbReference type="InterPro" id="IPR017850">
    <property type="entry name" value="Alkaline_phosphatase_core_sf"/>
</dbReference>
<dbReference type="InterPro" id="IPR007312">
    <property type="entry name" value="Phosphoesterase"/>
</dbReference>
<dbReference type="PANTHER" id="PTHR31956">
    <property type="entry name" value="NON-SPECIFIC PHOSPHOLIPASE C4-RELATED"/>
    <property type="match status" value="1"/>
</dbReference>
<dbReference type="PANTHER" id="PTHR31956:SF28">
    <property type="entry name" value="NON-SPECIFIC PHOSPHOLIPASE C4-RELATED"/>
    <property type="match status" value="1"/>
</dbReference>
<dbReference type="Pfam" id="PF04185">
    <property type="entry name" value="Phosphoesterase"/>
    <property type="match status" value="1"/>
</dbReference>
<dbReference type="SUPFAM" id="SSF53649">
    <property type="entry name" value="Alkaline phosphatase-like"/>
    <property type="match status" value="1"/>
</dbReference>
<organism>
    <name type="scientific">Arabidopsis thaliana</name>
    <name type="common">Mouse-ear cress</name>
    <dbReference type="NCBI Taxonomy" id="3702"/>
    <lineage>
        <taxon>Eukaryota</taxon>
        <taxon>Viridiplantae</taxon>
        <taxon>Streptophyta</taxon>
        <taxon>Embryophyta</taxon>
        <taxon>Tracheophyta</taxon>
        <taxon>Spermatophyta</taxon>
        <taxon>Magnoliopsida</taxon>
        <taxon>eudicotyledons</taxon>
        <taxon>Gunneridae</taxon>
        <taxon>Pentapetalae</taxon>
        <taxon>rosids</taxon>
        <taxon>malvids</taxon>
        <taxon>Brassicales</taxon>
        <taxon>Brassicaceae</taxon>
        <taxon>Camelineae</taxon>
        <taxon>Arabidopsis</taxon>
    </lineage>
</organism>
<gene>
    <name type="primary">NPC5</name>
    <name type="ordered locus">At3g03540</name>
    <name type="ORF">T12J13.18</name>
    <name type="ORF">T21P5.4</name>
</gene>
<feature type="chain" id="PRO_0000424787" description="Non-specific phospholipase C5">
    <location>
        <begin position="1"/>
        <end position="521"/>
    </location>
</feature>
<feature type="region of interest" description="Disordered" evidence="1">
    <location>
        <begin position="478"/>
        <end position="521"/>
    </location>
</feature>
<feature type="compositionally biased region" description="Basic and acidic residues" evidence="1">
    <location>
        <begin position="478"/>
        <end position="487"/>
    </location>
</feature>
<feature type="compositionally biased region" description="Polar residues" evidence="1">
    <location>
        <begin position="511"/>
        <end position="521"/>
    </location>
</feature>
<name>NPC5_ARATH</name>
<reference key="1">
    <citation type="journal article" date="2005" name="J. Biol. Chem.">
        <title>A novel phosphatidylcholine-hydrolyzing phospholipase C induced by phosphate starvation in Arabidopsis.</title>
        <authorList>
            <person name="Nakamura Y."/>
            <person name="Awai K."/>
            <person name="Masuda T."/>
            <person name="Yoshioka Y."/>
            <person name="Takamiya K."/>
            <person name="Ohta H."/>
        </authorList>
    </citation>
    <scope>NUCLEOTIDE SEQUENCE [MRNA]</scope>
    <scope>INDUCTION BY PHOSPHATE DEPRIVATION</scope>
</reference>
<reference key="2">
    <citation type="journal article" date="2000" name="Nature">
        <title>Sequence and analysis of chromosome 3 of the plant Arabidopsis thaliana.</title>
        <authorList>
            <person name="Salanoubat M."/>
            <person name="Lemcke K."/>
            <person name="Rieger M."/>
            <person name="Ansorge W."/>
            <person name="Unseld M."/>
            <person name="Fartmann B."/>
            <person name="Valle G."/>
            <person name="Bloecker H."/>
            <person name="Perez-Alonso M."/>
            <person name="Obermaier B."/>
            <person name="Delseny M."/>
            <person name="Boutry M."/>
            <person name="Grivell L.A."/>
            <person name="Mache R."/>
            <person name="Puigdomenech P."/>
            <person name="De Simone V."/>
            <person name="Choisne N."/>
            <person name="Artiguenave F."/>
            <person name="Robert C."/>
            <person name="Brottier P."/>
            <person name="Wincker P."/>
            <person name="Cattolico L."/>
            <person name="Weissenbach J."/>
            <person name="Saurin W."/>
            <person name="Quetier F."/>
            <person name="Schaefer M."/>
            <person name="Mueller-Auer S."/>
            <person name="Gabel C."/>
            <person name="Fuchs M."/>
            <person name="Benes V."/>
            <person name="Wurmbach E."/>
            <person name="Drzonek H."/>
            <person name="Erfle H."/>
            <person name="Jordan N."/>
            <person name="Bangert S."/>
            <person name="Wiedelmann R."/>
            <person name="Kranz H."/>
            <person name="Voss H."/>
            <person name="Holland R."/>
            <person name="Brandt P."/>
            <person name="Nyakatura G."/>
            <person name="Vezzi A."/>
            <person name="D'Angelo M."/>
            <person name="Pallavicini A."/>
            <person name="Toppo S."/>
            <person name="Simionati B."/>
            <person name="Conrad A."/>
            <person name="Hornischer K."/>
            <person name="Kauer G."/>
            <person name="Loehnert T.-H."/>
            <person name="Nordsiek G."/>
            <person name="Reichelt J."/>
            <person name="Scharfe M."/>
            <person name="Schoen O."/>
            <person name="Bargues M."/>
            <person name="Terol J."/>
            <person name="Climent J."/>
            <person name="Navarro P."/>
            <person name="Collado C."/>
            <person name="Perez-Perez A."/>
            <person name="Ottenwaelder B."/>
            <person name="Duchemin D."/>
            <person name="Cooke R."/>
            <person name="Laudie M."/>
            <person name="Berger-Llauro C."/>
            <person name="Purnelle B."/>
            <person name="Masuy D."/>
            <person name="de Haan M."/>
            <person name="Maarse A.C."/>
            <person name="Alcaraz J.-P."/>
            <person name="Cottet A."/>
            <person name="Casacuberta E."/>
            <person name="Monfort A."/>
            <person name="Argiriou A."/>
            <person name="Flores M."/>
            <person name="Liguori R."/>
            <person name="Vitale D."/>
            <person name="Mannhaupt G."/>
            <person name="Haase D."/>
            <person name="Schoof H."/>
            <person name="Rudd S."/>
            <person name="Zaccaria P."/>
            <person name="Mewes H.-W."/>
            <person name="Mayer K.F.X."/>
            <person name="Kaul S."/>
            <person name="Town C.D."/>
            <person name="Koo H.L."/>
            <person name="Tallon L.J."/>
            <person name="Jenkins J."/>
            <person name="Rooney T."/>
            <person name="Rizzo M."/>
            <person name="Walts A."/>
            <person name="Utterback T."/>
            <person name="Fujii C.Y."/>
            <person name="Shea T.P."/>
            <person name="Creasy T.H."/>
            <person name="Haas B."/>
            <person name="Maiti R."/>
            <person name="Wu D."/>
            <person name="Peterson J."/>
            <person name="Van Aken S."/>
            <person name="Pai G."/>
            <person name="Militscher J."/>
            <person name="Sellers P."/>
            <person name="Gill J.E."/>
            <person name="Feldblyum T.V."/>
            <person name="Preuss D."/>
            <person name="Lin X."/>
            <person name="Nierman W.C."/>
            <person name="Salzberg S.L."/>
            <person name="White O."/>
            <person name="Venter J.C."/>
            <person name="Fraser C.M."/>
            <person name="Kaneko T."/>
            <person name="Nakamura Y."/>
            <person name="Sato S."/>
            <person name="Kato T."/>
            <person name="Asamizu E."/>
            <person name="Sasamoto S."/>
            <person name="Kimura T."/>
            <person name="Idesawa K."/>
            <person name="Kawashima K."/>
            <person name="Kishida Y."/>
            <person name="Kiyokawa C."/>
            <person name="Kohara M."/>
            <person name="Matsumoto M."/>
            <person name="Matsuno A."/>
            <person name="Muraki A."/>
            <person name="Nakayama S."/>
            <person name="Nakazaki N."/>
            <person name="Shinpo S."/>
            <person name="Takeuchi C."/>
            <person name="Wada T."/>
            <person name="Watanabe A."/>
            <person name="Yamada M."/>
            <person name="Yasuda M."/>
            <person name="Tabata S."/>
        </authorList>
    </citation>
    <scope>NUCLEOTIDE SEQUENCE [LARGE SCALE GENOMIC DNA]</scope>
    <source>
        <strain>cv. Columbia</strain>
    </source>
</reference>
<reference key="3">
    <citation type="journal article" date="2017" name="Plant J.">
        <title>Araport11: a complete reannotation of the Arabidopsis thaliana reference genome.</title>
        <authorList>
            <person name="Cheng C.Y."/>
            <person name="Krishnakumar V."/>
            <person name="Chan A.P."/>
            <person name="Thibaud-Nissen F."/>
            <person name="Schobel S."/>
            <person name="Town C.D."/>
        </authorList>
    </citation>
    <scope>GENOME REANNOTATION</scope>
    <source>
        <strain>cv. Columbia</strain>
    </source>
</reference>
<reference key="4">
    <citation type="journal article" date="2008" name="Plant J.">
        <title>Phospholipase C5 (NPC5) is involved in galactolipid accumulation during phosphate limitation in leaves of Arabidopsis.</title>
        <authorList>
            <person name="Gaude N."/>
            <person name="Nakamura Y."/>
            <person name="Scheible W.R."/>
            <person name="Ohta H."/>
            <person name="Doermann P."/>
        </authorList>
    </citation>
    <scope>FUNCTION</scope>
    <scope>SUBCELLULAR LOCATION</scope>
    <scope>INDUCTION BY PHOSPHATE DEPRIVATION</scope>
    <scope>DISRUPTION PHENOTYPE</scope>
</reference>
<reference key="5">
    <citation type="journal article" date="2010" name="Mol. Plant">
        <title>Plant phosphatidylcholine-hydrolyzing phospholipases C NPC3 and NPC4 with roles in root development and brassinolide signaling in Arabidopsis thaliana.</title>
        <authorList>
            <person name="Wimalasekera R."/>
            <person name="Pejchar P."/>
            <person name="Holk A."/>
            <person name="Martinec J."/>
            <person name="Scherer G.F."/>
        </authorList>
    </citation>
    <scope>TISSUE SPECIFICITY</scope>
</reference>
<protein>
    <recommendedName>
        <fullName>Non-specific phospholipase C5</fullName>
        <ecNumber>3.1.4.3</ecNumber>
    </recommendedName>
</protein>